<gene>
    <name evidence="5" type="primary">fsa7</name>
</gene>
<organism>
    <name type="scientific">Fusarium sp. (strain FN080326)</name>
    <dbReference type="NCBI Taxonomy" id="1608308"/>
    <lineage>
        <taxon>Eukaryota</taxon>
        <taxon>Fungi</taxon>
        <taxon>Dikarya</taxon>
        <taxon>Ascomycota</taxon>
        <taxon>Pezizomycotina</taxon>
        <taxon>Sordariomycetes</taxon>
        <taxon>Hypocreomycetidae</taxon>
        <taxon>Hypocreales</taxon>
        <taxon>Nectriaceae</taxon>
        <taxon>Fusarium</taxon>
    </lineage>
</organism>
<keyword id="KW-1003">Cell membrane</keyword>
<keyword id="KW-0325">Glycoprotein</keyword>
<keyword id="KW-0472">Membrane</keyword>
<keyword id="KW-0812">Transmembrane</keyword>
<keyword id="KW-1133">Transmembrane helix</keyword>
<accession>A0A0E4AZP4</accession>
<sequence>MATKDPAVTTPDDSQLEAGRGNTGNNAGDALEKPSSSTGTMVDEPADPNVVDWDGPDDPEHPLNWSKTQKNLHLVIVSLFTLAANLAATMFAPGAEELATEFSITNSTVTAMTVSLYVLGFALGPLLLAPLSELYGRLIVYYGCNFVYIAFTIGCAFSTNVAMFLVFRIICGCAASGPMSIGGGTVADLFPQEERGKAMALFTVGPLLGPVIGPIIGGFVSENVGWRWTFRIILIFSGLIGVATVIFMRETNYTVLLQRKAQRARKETGNDKLVPKLTRNETPKQMLVRAIVRPLKLLIFSPIVLLVSLYTGILFGLIFLLFTTFPSVFQDVYGFSPGTAGLAYLGLGIGMILGLVLFSVLSDKMLKQKSGAARPEDRLILMKWLGPVTPLGLFIYGWTAKYAVHWIVPIIGTFVVGFGSLFVVIPGQIYLVDSFGAEAAASAMAANLLVRSPFGAFLDLTASPLYESLGLGWGNSVLGFICLLFTPVPWFFYTYGERMRTHFKVDL</sequence>
<evidence type="ECO:0000255" key="1"/>
<evidence type="ECO:0000255" key="2">
    <source>
        <dbReference type="PROSITE-ProRule" id="PRU00498"/>
    </source>
</evidence>
<evidence type="ECO:0000256" key="3">
    <source>
        <dbReference type="SAM" id="MobiDB-lite"/>
    </source>
</evidence>
<evidence type="ECO:0000269" key="4">
    <source>
    </source>
</evidence>
<evidence type="ECO:0000303" key="5">
    <source>
    </source>
</evidence>
<evidence type="ECO:0000305" key="6"/>
<evidence type="ECO:0000305" key="7">
    <source>
    </source>
</evidence>
<comment type="function">
    <text evidence="7">Efflux pump that might be required for efficient secretion of fusarisetin A or other secondary metabolies produced by the fusarisetin A gene cluster (PubMed:25770422).</text>
</comment>
<comment type="subcellular location">
    <subcellularLocation>
        <location evidence="6">Cell membrane</location>
        <topology evidence="1">Multi-pass membrane protein</topology>
    </subcellularLocation>
</comment>
<comment type="disruption phenotype">
    <text evidence="4">Fairly reduces the production of fusarisetin A (PubMed:25770422).</text>
</comment>
<comment type="similarity">
    <text evidence="6">Belongs to the major facilitator superfamily.</text>
</comment>
<feature type="chain" id="PRO_0000441309" description="MFS transporter fsa7">
    <location>
        <begin position="1"/>
        <end position="507"/>
    </location>
</feature>
<feature type="transmembrane region" description="Helical" evidence="1">
    <location>
        <begin position="72"/>
        <end position="92"/>
    </location>
</feature>
<feature type="transmembrane region" description="Helical" evidence="1">
    <location>
        <begin position="111"/>
        <end position="131"/>
    </location>
</feature>
<feature type="transmembrane region" description="Helical" evidence="1">
    <location>
        <begin position="146"/>
        <end position="166"/>
    </location>
</feature>
<feature type="transmembrane region" description="Helical" evidence="1">
    <location>
        <begin position="169"/>
        <end position="189"/>
    </location>
</feature>
<feature type="transmembrane region" description="Helical" evidence="1">
    <location>
        <begin position="200"/>
        <end position="220"/>
    </location>
</feature>
<feature type="transmembrane region" description="Helical" evidence="1">
    <location>
        <begin position="228"/>
        <end position="248"/>
    </location>
</feature>
<feature type="transmembrane region" description="Helical" evidence="1">
    <location>
        <begin position="302"/>
        <end position="322"/>
    </location>
</feature>
<feature type="transmembrane region" description="Helical" evidence="1">
    <location>
        <begin position="341"/>
        <end position="361"/>
    </location>
</feature>
<feature type="transmembrane region" description="Helical" evidence="1">
    <location>
        <begin position="379"/>
        <end position="399"/>
    </location>
</feature>
<feature type="transmembrane region" description="Helical" evidence="1">
    <location>
        <begin position="406"/>
        <end position="426"/>
    </location>
</feature>
<feature type="transmembrane region" description="Helical" evidence="1">
    <location>
        <begin position="429"/>
        <end position="449"/>
    </location>
</feature>
<feature type="transmembrane region" description="Helical" evidence="1">
    <location>
        <begin position="472"/>
        <end position="492"/>
    </location>
</feature>
<feature type="region of interest" description="Disordered" evidence="3">
    <location>
        <begin position="1"/>
        <end position="65"/>
    </location>
</feature>
<feature type="glycosylation site" description="N-linked (GlcNAc...) asparagine" evidence="2">
    <location>
        <position position="64"/>
    </location>
</feature>
<feature type="glycosylation site" description="N-linked (GlcNAc...) asparagine" evidence="2">
    <location>
        <position position="106"/>
    </location>
</feature>
<feature type="glycosylation site" description="N-linked (GlcNAc...) asparagine" evidence="2">
    <location>
        <position position="252"/>
    </location>
</feature>
<protein>
    <recommendedName>
        <fullName evidence="5">MFS transporter fsa7</fullName>
    </recommendedName>
    <alternativeName>
        <fullName evidence="5">Fusarisetin A biosynthesis protein 7</fullName>
    </alternativeName>
</protein>
<name>FSA7_FUSSF</name>
<proteinExistence type="inferred from homology"/>
<dbReference type="EMBL" id="LC025956">
    <property type="protein sequence ID" value="BAR40289.1"/>
    <property type="molecule type" value="Genomic_DNA"/>
</dbReference>
<dbReference type="GlyCosmos" id="A0A0E4AZP4">
    <property type="glycosylation" value="3 sites, No reported glycans"/>
</dbReference>
<dbReference type="GO" id="GO:0005886">
    <property type="term" value="C:plasma membrane"/>
    <property type="evidence" value="ECO:0007669"/>
    <property type="project" value="UniProtKB-SubCell"/>
</dbReference>
<dbReference type="GO" id="GO:0022857">
    <property type="term" value="F:transmembrane transporter activity"/>
    <property type="evidence" value="ECO:0007669"/>
    <property type="project" value="InterPro"/>
</dbReference>
<dbReference type="CDD" id="cd17323">
    <property type="entry name" value="MFS_Tpo1_MDR_like"/>
    <property type="match status" value="1"/>
</dbReference>
<dbReference type="FunFam" id="1.20.1250.20:FF:000082">
    <property type="entry name" value="MFS multidrug transporter, putative"/>
    <property type="match status" value="1"/>
</dbReference>
<dbReference type="Gene3D" id="1.20.1250.20">
    <property type="entry name" value="MFS general substrate transporter like domains"/>
    <property type="match status" value="1"/>
</dbReference>
<dbReference type="InterPro" id="IPR011701">
    <property type="entry name" value="MFS"/>
</dbReference>
<dbReference type="InterPro" id="IPR020846">
    <property type="entry name" value="MFS_dom"/>
</dbReference>
<dbReference type="InterPro" id="IPR036259">
    <property type="entry name" value="MFS_trans_sf"/>
</dbReference>
<dbReference type="PANTHER" id="PTHR23502">
    <property type="entry name" value="MAJOR FACILITATOR SUPERFAMILY"/>
    <property type="match status" value="1"/>
</dbReference>
<dbReference type="PANTHER" id="PTHR23502:SF68">
    <property type="entry name" value="MULTIDRUG TRANSPORTER, PUTATIVE (AFU_ORTHOLOGUE AFUA_3G01120)-RELATED"/>
    <property type="match status" value="1"/>
</dbReference>
<dbReference type="Pfam" id="PF07690">
    <property type="entry name" value="MFS_1"/>
    <property type="match status" value="1"/>
</dbReference>
<dbReference type="SUPFAM" id="SSF103473">
    <property type="entry name" value="MFS general substrate transporter"/>
    <property type="match status" value="1"/>
</dbReference>
<dbReference type="PROSITE" id="PS50850">
    <property type="entry name" value="MFS"/>
    <property type="match status" value="1"/>
</dbReference>
<reference key="1">
    <citation type="journal article" date="2015" name="Biochem. Biophys. Res. Commun.">
        <title>A new enzyme involved in the control of the stereochemistry in the decalin formation during equisetin biosynthesis.</title>
        <authorList>
            <person name="Kato N."/>
            <person name="Nogawa T."/>
            <person name="Hirota H."/>
            <person name="Jang J.H."/>
            <person name="Takahashi S."/>
            <person name="Ahn J.S."/>
            <person name="Osada H."/>
        </authorList>
    </citation>
    <scope>NUCLEOTIDE SEQUENCE [GENOMIC DNA]</scope>
    <scope>FUNCTION</scope>
    <scope>DISRUPTION PHENOTYPE</scope>
</reference>